<accession>P16031</accession>
<proteinExistence type="inferred from homology"/>
<dbReference type="EMBL" id="X16039">
    <property type="protein sequence ID" value="CAA34161.1"/>
    <property type="molecule type" value="Genomic_DNA"/>
</dbReference>
<dbReference type="PIR" id="S15771">
    <property type="entry name" value="RKKHS"/>
</dbReference>
<dbReference type="SMR" id="P16031"/>
<dbReference type="GO" id="GO:0009507">
    <property type="term" value="C:chloroplast"/>
    <property type="evidence" value="ECO:0007669"/>
    <property type="project" value="UniProtKB-SubCell"/>
</dbReference>
<dbReference type="GO" id="GO:0016984">
    <property type="term" value="F:ribulose-bisphosphate carboxylase activity"/>
    <property type="evidence" value="ECO:0007669"/>
    <property type="project" value="UniProtKB-UniRule"/>
</dbReference>
<dbReference type="GO" id="GO:0009853">
    <property type="term" value="P:photorespiration"/>
    <property type="evidence" value="ECO:0007669"/>
    <property type="project" value="UniProtKB-KW"/>
</dbReference>
<dbReference type="GO" id="GO:0019253">
    <property type="term" value="P:reductive pentose-phosphate cycle"/>
    <property type="evidence" value="ECO:0007669"/>
    <property type="project" value="UniProtKB-UniRule"/>
</dbReference>
<dbReference type="CDD" id="cd03527">
    <property type="entry name" value="RuBisCO_small"/>
    <property type="match status" value="1"/>
</dbReference>
<dbReference type="FunFam" id="3.30.190.10:FF:000001">
    <property type="entry name" value="Ribulose bisphosphate carboxylase small chain, chloroplastic"/>
    <property type="match status" value="1"/>
</dbReference>
<dbReference type="Gene3D" id="3.30.190.10">
    <property type="entry name" value="Ribulose bisphosphate carboxylase, small subunit"/>
    <property type="match status" value="1"/>
</dbReference>
<dbReference type="HAMAP" id="MF_00859">
    <property type="entry name" value="RuBisCO_S_bact"/>
    <property type="match status" value="1"/>
</dbReference>
<dbReference type="InterPro" id="IPR024681">
    <property type="entry name" value="RuBisCO_ssu"/>
</dbReference>
<dbReference type="InterPro" id="IPR000894">
    <property type="entry name" value="RuBisCO_ssu_dom"/>
</dbReference>
<dbReference type="InterPro" id="IPR036385">
    <property type="entry name" value="RuBisCO_ssu_sf"/>
</dbReference>
<dbReference type="PANTHER" id="PTHR31262">
    <property type="entry name" value="RIBULOSE BISPHOSPHATE CARBOXYLASE SMALL CHAIN 1, CHLOROPLASTIC"/>
    <property type="match status" value="1"/>
</dbReference>
<dbReference type="PANTHER" id="PTHR31262:SF10">
    <property type="entry name" value="RIBULOSE BISPHOSPHATE CARBOXYLASE SMALL SUBUNIT 1A, CHLOROPLASTIC-RELATED"/>
    <property type="match status" value="1"/>
</dbReference>
<dbReference type="Pfam" id="PF00101">
    <property type="entry name" value="RuBisCO_small"/>
    <property type="match status" value="1"/>
</dbReference>
<dbReference type="PRINTS" id="PR00152">
    <property type="entry name" value="RUBISCOSMALL"/>
</dbReference>
<dbReference type="SMART" id="SM00961">
    <property type="entry name" value="RuBisCO_small"/>
    <property type="match status" value="1"/>
</dbReference>
<dbReference type="SUPFAM" id="SSF55239">
    <property type="entry name" value="RuBisCO, small subunit"/>
    <property type="match status" value="1"/>
</dbReference>
<protein>
    <recommendedName>
        <fullName evidence="1">Ribulose bisphosphate carboxylase small subunit, chloroplastic</fullName>
        <shortName evidence="1">RuBisCO small subunit</shortName>
    </recommendedName>
</protein>
<gene>
    <name evidence="1" type="primary">RBCS</name>
</gene>
<evidence type="ECO:0000255" key="1">
    <source>
        <dbReference type="HAMAP-Rule" id="MF_00860"/>
    </source>
</evidence>
<name>RBS_LARLA</name>
<organism>
    <name type="scientific">Larix laricina</name>
    <name type="common">Tamarack</name>
    <name type="synonym">Pinus laricina</name>
    <dbReference type="NCBI Taxonomy" id="3326"/>
    <lineage>
        <taxon>Eukaryota</taxon>
        <taxon>Viridiplantae</taxon>
        <taxon>Streptophyta</taxon>
        <taxon>Embryophyta</taxon>
        <taxon>Tracheophyta</taxon>
        <taxon>Spermatophyta</taxon>
        <taxon>Pinopsida</taxon>
        <taxon>Pinidae</taxon>
        <taxon>Conifers I</taxon>
        <taxon>Pinales</taxon>
        <taxon>Pinaceae</taxon>
        <taxon>Larix</taxon>
    </lineage>
</organism>
<reference key="1">
    <citation type="journal article" date="1990" name="Plant Mol. Biol.">
        <title>Nucleotide sequence of the small subunit of ribulose-1,5-bisphosphate carboxylase from the conifer Larix laricina.</title>
        <authorList>
            <person name="Hutchison K.W."/>
            <person name="Harvie P.D."/>
            <person name="Singer P.B."/>
            <person name="Brunner A.F."/>
            <person name="Greenwood M.G."/>
        </authorList>
    </citation>
    <scope>NUCLEOTIDE SEQUENCE [GENOMIC DNA]</scope>
    <source>
        <tissue>Needle</tissue>
    </source>
</reference>
<comment type="function">
    <text evidence="1">RuBisCO catalyzes two reactions: the carboxylation of D-ribulose 1,5-bisphosphate, the primary event in carbon dioxide fixation, as well as the oxidative fragmentation of the pentose substrate. Both reactions occur simultaneously and in competition at the same active site. Although the small subunit is not catalytic it is essential for maximal activity.</text>
</comment>
<comment type="subunit">
    <text evidence="1">Heterohexadecamer of 8 large and 8 small subunits.</text>
</comment>
<comment type="subcellular location">
    <subcellularLocation>
        <location evidence="1">Plastid</location>
        <location evidence="1">Chloroplast</location>
    </subcellularLocation>
</comment>
<comment type="miscellaneous">
    <text evidence="1">The basic functional RuBisCO is composed of a large chain homodimer in a 'head-to-tail' conformation. In form I RuBisCO this homodimer is arranged in a barrel-like tetramer with the small subunits forming a tetrameric 'cap' on each end of the 'barrel'.</text>
</comment>
<comment type="similarity">
    <text evidence="1">Belongs to the RuBisCO small chain family.</text>
</comment>
<sequence>MASSIMALSSTAAVAAVAAPSKTGNSNVVSAFTGLKSMAQFPSSKTMSNAGAEWEQKTTSNGSRVRCMQVWPPYANKKFETLSYLPRLTPEQLVKEVEYLLKNKWVPCLEFEEDGEIKRVYGNSPGYYDGRYWVMWKLPMFGCTEASQVLNEVNECAKAYPNAFIRVIGFDNVRQVQCISFIVHKPEYN</sequence>
<keyword id="KW-0113">Calvin cycle</keyword>
<keyword id="KW-0120">Carbon dioxide fixation</keyword>
<keyword id="KW-0150">Chloroplast</keyword>
<keyword id="KW-0601">Photorespiration</keyword>
<keyword id="KW-0602">Photosynthesis</keyword>
<keyword id="KW-0934">Plastid</keyword>
<keyword id="KW-0809">Transit peptide</keyword>
<feature type="transit peptide" description="Chloroplast" evidence="1">
    <location>
        <begin position="1"/>
        <end position="66"/>
    </location>
</feature>
<feature type="chain" id="PRO_0000031511" description="Ribulose bisphosphate carboxylase small subunit, chloroplastic" evidence="1">
    <location>
        <begin position="67"/>
        <end position="189"/>
    </location>
</feature>